<reference key="1">
    <citation type="submission" date="2006-01" db="EMBL/GenBank/DDBJ databases">
        <title>Complete sequence of Rhodopseudomonas palustris HaA2.</title>
        <authorList>
            <consortium name="US DOE Joint Genome Institute"/>
            <person name="Copeland A."/>
            <person name="Lucas S."/>
            <person name="Lapidus A."/>
            <person name="Barry K."/>
            <person name="Detter J.C."/>
            <person name="Glavina T."/>
            <person name="Hammon N."/>
            <person name="Israni S."/>
            <person name="Pitluck S."/>
            <person name="Chain P."/>
            <person name="Malfatti S."/>
            <person name="Shin M."/>
            <person name="Vergez L."/>
            <person name="Schmutz J."/>
            <person name="Larimer F."/>
            <person name="Land M."/>
            <person name="Hauser L."/>
            <person name="Pelletier D.A."/>
            <person name="Kyrpides N."/>
            <person name="Anderson I."/>
            <person name="Oda Y."/>
            <person name="Harwood C.S."/>
            <person name="Richardson P."/>
        </authorList>
    </citation>
    <scope>NUCLEOTIDE SEQUENCE [LARGE SCALE GENOMIC DNA]</scope>
    <source>
        <strain>HaA2</strain>
    </source>
</reference>
<keyword id="KW-0963">Cytoplasm</keyword>
<keyword id="KW-0396">Initiation factor</keyword>
<keyword id="KW-0648">Protein biosynthesis</keyword>
<keyword id="KW-1185">Reference proteome</keyword>
<keyword id="KW-0694">RNA-binding</keyword>
<keyword id="KW-0699">rRNA-binding</keyword>
<sequence length="94" mass="10693">MAKEELIQFEGLVTEILPDARYRVQLDAGHEIVAYTAGKMKKNRIKTLAGDRVTIEMSPYDLEKGRLIFRHKDERPGGTGAPRSGPPRGQFRRR</sequence>
<dbReference type="EMBL" id="CP000250">
    <property type="protein sequence ID" value="ABD06500.1"/>
    <property type="molecule type" value="Genomic_DNA"/>
</dbReference>
<dbReference type="RefSeq" id="WP_011440688.1">
    <property type="nucleotide sequence ID" value="NC_007778.1"/>
</dbReference>
<dbReference type="SMR" id="Q2IZ60"/>
<dbReference type="STRING" id="316058.RPB_1792"/>
<dbReference type="KEGG" id="rpb:RPB_1792"/>
<dbReference type="eggNOG" id="COG0361">
    <property type="taxonomic scope" value="Bacteria"/>
</dbReference>
<dbReference type="HOGENOM" id="CLU_151267_4_1_5"/>
<dbReference type="OrthoDB" id="9803250at2"/>
<dbReference type="Proteomes" id="UP000008809">
    <property type="component" value="Chromosome"/>
</dbReference>
<dbReference type="GO" id="GO:0005829">
    <property type="term" value="C:cytosol"/>
    <property type="evidence" value="ECO:0007669"/>
    <property type="project" value="TreeGrafter"/>
</dbReference>
<dbReference type="GO" id="GO:0043022">
    <property type="term" value="F:ribosome binding"/>
    <property type="evidence" value="ECO:0007669"/>
    <property type="project" value="UniProtKB-UniRule"/>
</dbReference>
<dbReference type="GO" id="GO:0019843">
    <property type="term" value="F:rRNA binding"/>
    <property type="evidence" value="ECO:0007669"/>
    <property type="project" value="UniProtKB-UniRule"/>
</dbReference>
<dbReference type="GO" id="GO:0003743">
    <property type="term" value="F:translation initiation factor activity"/>
    <property type="evidence" value="ECO:0007669"/>
    <property type="project" value="UniProtKB-UniRule"/>
</dbReference>
<dbReference type="CDD" id="cd04451">
    <property type="entry name" value="S1_IF1"/>
    <property type="match status" value="1"/>
</dbReference>
<dbReference type="FunFam" id="2.40.50.140:FF:000002">
    <property type="entry name" value="Translation initiation factor IF-1"/>
    <property type="match status" value="1"/>
</dbReference>
<dbReference type="Gene3D" id="2.40.50.140">
    <property type="entry name" value="Nucleic acid-binding proteins"/>
    <property type="match status" value="1"/>
</dbReference>
<dbReference type="HAMAP" id="MF_00075">
    <property type="entry name" value="IF_1"/>
    <property type="match status" value="1"/>
</dbReference>
<dbReference type="InterPro" id="IPR012340">
    <property type="entry name" value="NA-bd_OB-fold"/>
</dbReference>
<dbReference type="InterPro" id="IPR006196">
    <property type="entry name" value="RNA-binding_domain_S1_IF1"/>
</dbReference>
<dbReference type="InterPro" id="IPR004368">
    <property type="entry name" value="TIF_IF1"/>
</dbReference>
<dbReference type="NCBIfam" id="TIGR00008">
    <property type="entry name" value="infA"/>
    <property type="match status" value="1"/>
</dbReference>
<dbReference type="PANTHER" id="PTHR33370">
    <property type="entry name" value="TRANSLATION INITIATION FACTOR IF-1, CHLOROPLASTIC"/>
    <property type="match status" value="1"/>
</dbReference>
<dbReference type="PANTHER" id="PTHR33370:SF1">
    <property type="entry name" value="TRANSLATION INITIATION FACTOR IF-1, CHLOROPLASTIC"/>
    <property type="match status" value="1"/>
</dbReference>
<dbReference type="Pfam" id="PF01176">
    <property type="entry name" value="eIF-1a"/>
    <property type="match status" value="1"/>
</dbReference>
<dbReference type="SUPFAM" id="SSF50249">
    <property type="entry name" value="Nucleic acid-binding proteins"/>
    <property type="match status" value="1"/>
</dbReference>
<dbReference type="PROSITE" id="PS50832">
    <property type="entry name" value="S1_IF1_TYPE"/>
    <property type="match status" value="1"/>
</dbReference>
<feature type="chain" id="PRO_0000263859" description="Translation initiation factor IF-1">
    <location>
        <begin position="1"/>
        <end position="94"/>
    </location>
</feature>
<feature type="domain" description="S1-like" evidence="1">
    <location>
        <begin position="1"/>
        <end position="72"/>
    </location>
</feature>
<feature type="region of interest" description="Disordered" evidence="2">
    <location>
        <begin position="71"/>
        <end position="94"/>
    </location>
</feature>
<protein>
    <recommendedName>
        <fullName evidence="1">Translation initiation factor IF-1</fullName>
    </recommendedName>
</protein>
<comment type="function">
    <text evidence="1">One of the essential components for the initiation of protein synthesis. Stabilizes the binding of IF-2 and IF-3 on the 30S subunit to which N-formylmethionyl-tRNA(fMet) subsequently binds. Helps modulate mRNA selection, yielding the 30S pre-initiation complex (PIC). Upon addition of the 50S ribosomal subunit IF-1, IF-2 and IF-3 are released leaving the mature 70S translation initiation complex.</text>
</comment>
<comment type="subunit">
    <text evidence="1">Component of the 30S ribosomal translation pre-initiation complex which assembles on the 30S ribosome in the order IF-2 and IF-3, IF-1 and N-formylmethionyl-tRNA(fMet); mRNA recruitment can occur at any time during PIC assembly.</text>
</comment>
<comment type="subcellular location">
    <subcellularLocation>
        <location evidence="1">Cytoplasm</location>
    </subcellularLocation>
</comment>
<comment type="similarity">
    <text evidence="1">Belongs to the IF-1 family.</text>
</comment>
<evidence type="ECO:0000255" key="1">
    <source>
        <dbReference type="HAMAP-Rule" id="MF_00075"/>
    </source>
</evidence>
<evidence type="ECO:0000256" key="2">
    <source>
        <dbReference type="SAM" id="MobiDB-lite"/>
    </source>
</evidence>
<organism>
    <name type="scientific">Rhodopseudomonas palustris (strain HaA2)</name>
    <dbReference type="NCBI Taxonomy" id="316058"/>
    <lineage>
        <taxon>Bacteria</taxon>
        <taxon>Pseudomonadati</taxon>
        <taxon>Pseudomonadota</taxon>
        <taxon>Alphaproteobacteria</taxon>
        <taxon>Hyphomicrobiales</taxon>
        <taxon>Nitrobacteraceae</taxon>
        <taxon>Rhodopseudomonas</taxon>
    </lineage>
</organism>
<name>IF1_RHOP2</name>
<gene>
    <name evidence="1" type="primary">infA</name>
    <name type="ordered locus">RPB_1792</name>
</gene>
<accession>Q2IZ60</accession>
<proteinExistence type="inferred from homology"/>